<feature type="chain" id="PRO_1000007750" description="5'-nucleotidase SurE">
    <location>
        <begin position="1"/>
        <end position="247"/>
    </location>
</feature>
<feature type="binding site" evidence="1">
    <location>
        <position position="8"/>
    </location>
    <ligand>
        <name>a divalent metal cation</name>
        <dbReference type="ChEBI" id="CHEBI:60240"/>
    </ligand>
</feature>
<feature type="binding site" evidence="1">
    <location>
        <position position="9"/>
    </location>
    <ligand>
        <name>a divalent metal cation</name>
        <dbReference type="ChEBI" id="CHEBI:60240"/>
    </ligand>
</feature>
<feature type="binding site" evidence="1">
    <location>
        <position position="39"/>
    </location>
    <ligand>
        <name>a divalent metal cation</name>
        <dbReference type="ChEBI" id="CHEBI:60240"/>
    </ligand>
</feature>
<feature type="binding site" evidence="1">
    <location>
        <position position="91"/>
    </location>
    <ligand>
        <name>a divalent metal cation</name>
        <dbReference type="ChEBI" id="CHEBI:60240"/>
    </ligand>
</feature>
<comment type="function">
    <text evidence="1">Nucleotidase that shows phosphatase activity on nucleoside 5'-monophosphates.</text>
</comment>
<comment type="catalytic activity">
    <reaction evidence="1">
        <text>a ribonucleoside 5'-phosphate + H2O = a ribonucleoside + phosphate</text>
        <dbReference type="Rhea" id="RHEA:12484"/>
        <dbReference type="ChEBI" id="CHEBI:15377"/>
        <dbReference type="ChEBI" id="CHEBI:18254"/>
        <dbReference type="ChEBI" id="CHEBI:43474"/>
        <dbReference type="ChEBI" id="CHEBI:58043"/>
        <dbReference type="EC" id="3.1.3.5"/>
    </reaction>
</comment>
<comment type="cofactor">
    <cofactor evidence="1">
        <name>a divalent metal cation</name>
        <dbReference type="ChEBI" id="CHEBI:60240"/>
    </cofactor>
    <text evidence="1">Binds 1 divalent metal cation per subunit.</text>
</comment>
<comment type="subcellular location">
    <subcellularLocation>
        <location evidence="1">Cytoplasm</location>
    </subcellularLocation>
</comment>
<comment type="similarity">
    <text evidence="1">Belongs to the SurE nucleotidase family.</text>
</comment>
<evidence type="ECO:0000255" key="1">
    <source>
        <dbReference type="HAMAP-Rule" id="MF_00060"/>
    </source>
</evidence>
<protein>
    <recommendedName>
        <fullName evidence="1">5'-nucleotidase SurE</fullName>
        <ecNumber evidence="1">3.1.3.5</ecNumber>
    </recommendedName>
    <alternativeName>
        <fullName evidence="1">Nucleoside 5'-monophosphate phosphohydrolase</fullName>
    </alternativeName>
</protein>
<organism>
    <name type="scientific">Methylobacillus flagellatus (strain ATCC 51484 / DSM 6875 / VKM B-1610 / KT)</name>
    <dbReference type="NCBI Taxonomy" id="265072"/>
    <lineage>
        <taxon>Bacteria</taxon>
        <taxon>Pseudomonadati</taxon>
        <taxon>Pseudomonadota</taxon>
        <taxon>Betaproteobacteria</taxon>
        <taxon>Nitrosomonadales</taxon>
        <taxon>Methylophilaceae</taxon>
        <taxon>Methylobacillus</taxon>
    </lineage>
</organism>
<keyword id="KW-0963">Cytoplasm</keyword>
<keyword id="KW-0378">Hydrolase</keyword>
<keyword id="KW-0479">Metal-binding</keyword>
<keyword id="KW-0547">Nucleotide-binding</keyword>
<keyword id="KW-1185">Reference proteome</keyword>
<reference key="1">
    <citation type="submission" date="2006-03" db="EMBL/GenBank/DDBJ databases">
        <title>Complete sequence of Methylobacillus flagellatus KT.</title>
        <authorList>
            <consortium name="US DOE Joint Genome Institute"/>
            <person name="Copeland A."/>
            <person name="Lucas S."/>
            <person name="Lapidus A."/>
            <person name="Barry K."/>
            <person name="Detter J.C."/>
            <person name="Glavina del Rio T."/>
            <person name="Hammon N."/>
            <person name="Israni S."/>
            <person name="Dalin E."/>
            <person name="Tice H."/>
            <person name="Pitluck S."/>
            <person name="Brettin T."/>
            <person name="Bruce D."/>
            <person name="Han C."/>
            <person name="Tapia R."/>
            <person name="Saunders E."/>
            <person name="Gilna P."/>
            <person name="Schmutz J."/>
            <person name="Larimer F."/>
            <person name="Land M."/>
            <person name="Kyrpides N."/>
            <person name="Anderson I."/>
            <person name="Richardson P."/>
        </authorList>
    </citation>
    <scope>NUCLEOTIDE SEQUENCE [LARGE SCALE GENOMIC DNA]</scope>
    <source>
        <strain>ATCC 51484 / DSM 6875 / VKM B-1610 / KT</strain>
    </source>
</reference>
<gene>
    <name evidence="1" type="primary">surE</name>
    <name type="ordered locus">Mfla_1824</name>
</gene>
<sequence>MRILLSNDDGYFAPGLNILAQHLAKVADIVVVAPERDRSGASNSLTLDRPLSVHRANNGFYYVNGTPTDCVHLAVTGLLDELPDMVISGINDGANMGDDTIYSGTVAAATEGFLLGVPSFAVSMSRHGVQHFETAAKFMVSLVKRYQKDRFPPPVLLNINVPDVPFDQIKGTEVTRLGKRHKAEPVIKSTTPRGQTVYWIGAAGSAQDAGDGTDFHAVSQNRISITPLQIDLTQYSQREQVKNWLAL</sequence>
<proteinExistence type="inferred from homology"/>
<name>SURE_METFK</name>
<dbReference type="EC" id="3.1.3.5" evidence="1"/>
<dbReference type="EMBL" id="CP000284">
    <property type="protein sequence ID" value="ABE50091.1"/>
    <property type="molecule type" value="Genomic_DNA"/>
</dbReference>
<dbReference type="RefSeq" id="WP_011480045.1">
    <property type="nucleotide sequence ID" value="NC_007947.1"/>
</dbReference>
<dbReference type="SMR" id="Q1H096"/>
<dbReference type="STRING" id="265072.Mfla_1824"/>
<dbReference type="KEGG" id="mfa:Mfla_1824"/>
<dbReference type="eggNOG" id="COG0496">
    <property type="taxonomic scope" value="Bacteria"/>
</dbReference>
<dbReference type="HOGENOM" id="CLU_045192_1_2_4"/>
<dbReference type="OrthoDB" id="9780815at2"/>
<dbReference type="Proteomes" id="UP000002440">
    <property type="component" value="Chromosome"/>
</dbReference>
<dbReference type="GO" id="GO:0005737">
    <property type="term" value="C:cytoplasm"/>
    <property type="evidence" value="ECO:0007669"/>
    <property type="project" value="UniProtKB-SubCell"/>
</dbReference>
<dbReference type="GO" id="GO:0008254">
    <property type="term" value="F:3'-nucleotidase activity"/>
    <property type="evidence" value="ECO:0007669"/>
    <property type="project" value="TreeGrafter"/>
</dbReference>
<dbReference type="GO" id="GO:0008253">
    <property type="term" value="F:5'-nucleotidase activity"/>
    <property type="evidence" value="ECO:0007669"/>
    <property type="project" value="UniProtKB-UniRule"/>
</dbReference>
<dbReference type="GO" id="GO:0004309">
    <property type="term" value="F:exopolyphosphatase activity"/>
    <property type="evidence" value="ECO:0007669"/>
    <property type="project" value="TreeGrafter"/>
</dbReference>
<dbReference type="GO" id="GO:0046872">
    <property type="term" value="F:metal ion binding"/>
    <property type="evidence" value="ECO:0007669"/>
    <property type="project" value="UniProtKB-UniRule"/>
</dbReference>
<dbReference type="GO" id="GO:0000166">
    <property type="term" value="F:nucleotide binding"/>
    <property type="evidence" value="ECO:0007669"/>
    <property type="project" value="UniProtKB-KW"/>
</dbReference>
<dbReference type="FunFam" id="3.40.1210.10:FF:000001">
    <property type="entry name" value="5'/3'-nucleotidase SurE"/>
    <property type="match status" value="1"/>
</dbReference>
<dbReference type="Gene3D" id="3.40.1210.10">
    <property type="entry name" value="Survival protein SurE-like phosphatase/nucleotidase"/>
    <property type="match status" value="1"/>
</dbReference>
<dbReference type="HAMAP" id="MF_00060">
    <property type="entry name" value="SurE"/>
    <property type="match status" value="1"/>
</dbReference>
<dbReference type="InterPro" id="IPR030048">
    <property type="entry name" value="SurE"/>
</dbReference>
<dbReference type="InterPro" id="IPR002828">
    <property type="entry name" value="SurE-like_Pase/nucleotidase"/>
</dbReference>
<dbReference type="InterPro" id="IPR036523">
    <property type="entry name" value="SurE-like_sf"/>
</dbReference>
<dbReference type="NCBIfam" id="NF001489">
    <property type="entry name" value="PRK00346.1-3"/>
    <property type="match status" value="1"/>
</dbReference>
<dbReference type="NCBIfam" id="NF001490">
    <property type="entry name" value="PRK00346.1-4"/>
    <property type="match status" value="1"/>
</dbReference>
<dbReference type="NCBIfam" id="TIGR00087">
    <property type="entry name" value="surE"/>
    <property type="match status" value="1"/>
</dbReference>
<dbReference type="PANTHER" id="PTHR30457">
    <property type="entry name" value="5'-NUCLEOTIDASE SURE"/>
    <property type="match status" value="1"/>
</dbReference>
<dbReference type="PANTHER" id="PTHR30457:SF12">
    <property type="entry name" value="5'_3'-NUCLEOTIDASE SURE"/>
    <property type="match status" value="1"/>
</dbReference>
<dbReference type="Pfam" id="PF01975">
    <property type="entry name" value="SurE"/>
    <property type="match status" value="1"/>
</dbReference>
<dbReference type="SUPFAM" id="SSF64167">
    <property type="entry name" value="SurE-like"/>
    <property type="match status" value="1"/>
</dbReference>
<accession>Q1H096</accession>